<protein>
    <recommendedName>
        <fullName>Protein disulfide-isomerase EUG1</fullName>
        <shortName>PDI</shortName>
        <ecNumber>5.3.4.1</ecNumber>
    </recommendedName>
    <alternativeName>
        <fullName>Endoplasmic reticulum protein EUG1</fullName>
    </alternativeName>
</protein>
<dbReference type="EC" id="5.3.4.1"/>
<dbReference type="EMBL" id="M84796">
    <property type="protein sequence ID" value="AAA18226.1"/>
    <property type="molecule type" value="Unassigned_DNA"/>
</dbReference>
<dbReference type="EMBL" id="U33057">
    <property type="protein sequence ID" value="AAB64959.1"/>
    <property type="molecule type" value="Genomic_DNA"/>
</dbReference>
<dbReference type="EMBL" id="AY692970">
    <property type="protein sequence ID" value="AAT92989.1"/>
    <property type="molecule type" value="Genomic_DNA"/>
</dbReference>
<dbReference type="EMBL" id="BK006938">
    <property type="protein sequence ID" value="DAA12349.1"/>
    <property type="molecule type" value="Genomic_DNA"/>
</dbReference>
<dbReference type="PIR" id="A44483">
    <property type="entry name" value="A44483"/>
</dbReference>
<dbReference type="RefSeq" id="NP_010806.1">
    <property type="nucleotide sequence ID" value="NM_001180826.1"/>
</dbReference>
<dbReference type="SMR" id="P32474"/>
<dbReference type="BioGRID" id="32569">
    <property type="interactions" value="210"/>
</dbReference>
<dbReference type="FunCoup" id="P32474">
    <property type="interactions" value="634"/>
</dbReference>
<dbReference type="IntAct" id="P32474">
    <property type="interactions" value="1"/>
</dbReference>
<dbReference type="STRING" id="4932.YDR518W"/>
<dbReference type="GlyCosmos" id="P32474">
    <property type="glycosylation" value="5 sites, No reported glycans"/>
</dbReference>
<dbReference type="GlyGen" id="P32474">
    <property type="glycosylation" value="6 sites"/>
</dbReference>
<dbReference type="iPTMnet" id="P32474"/>
<dbReference type="PaxDb" id="4932-YDR518W"/>
<dbReference type="PeptideAtlas" id="P32474"/>
<dbReference type="EnsemblFungi" id="YDR518W_mRNA">
    <property type="protein sequence ID" value="YDR518W"/>
    <property type="gene ID" value="YDR518W"/>
</dbReference>
<dbReference type="GeneID" id="852130"/>
<dbReference type="KEGG" id="sce:YDR518W"/>
<dbReference type="AGR" id="SGD:S000002926"/>
<dbReference type="SGD" id="S000002926">
    <property type="gene designation" value="EUG1"/>
</dbReference>
<dbReference type="VEuPathDB" id="FungiDB:YDR518W"/>
<dbReference type="eggNOG" id="KOG0190">
    <property type="taxonomic scope" value="Eukaryota"/>
</dbReference>
<dbReference type="GeneTree" id="ENSGT00940000168753"/>
<dbReference type="HOGENOM" id="CLU_025879_5_0_1"/>
<dbReference type="InParanoid" id="P32474"/>
<dbReference type="OMA" id="REDYVWS"/>
<dbReference type="OrthoDB" id="427280at2759"/>
<dbReference type="BioCyc" id="YEAST:YDR518W-MONOMER"/>
<dbReference type="BioGRID-ORCS" id="852130">
    <property type="hits" value="4 hits in 10 CRISPR screens"/>
</dbReference>
<dbReference type="PRO" id="PR:P32474"/>
<dbReference type="Proteomes" id="UP000002311">
    <property type="component" value="Chromosome IV"/>
</dbReference>
<dbReference type="RNAct" id="P32474">
    <property type="molecule type" value="protein"/>
</dbReference>
<dbReference type="GO" id="GO:0005783">
    <property type="term" value="C:endoplasmic reticulum"/>
    <property type="evidence" value="ECO:0007005"/>
    <property type="project" value="SGD"/>
</dbReference>
<dbReference type="GO" id="GO:0005788">
    <property type="term" value="C:endoplasmic reticulum lumen"/>
    <property type="evidence" value="ECO:0007669"/>
    <property type="project" value="UniProtKB-SubCell"/>
</dbReference>
<dbReference type="GO" id="GO:0003756">
    <property type="term" value="F:protein disulfide isomerase activity"/>
    <property type="evidence" value="ECO:0000314"/>
    <property type="project" value="SGD"/>
</dbReference>
<dbReference type="GO" id="GO:0019153">
    <property type="term" value="F:protein-disulfide reductase (glutathione) activity"/>
    <property type="evidence" value="ECO:0000314"/>
    <property type="project" value="SGD"/>
</dbReference>
<dbReference type="GO" id="GO:0015035">
    <property type="term" value="F:protein-disulfide reductase activity"/>
    <property type="evidence" value="ECO:0000314"/>
    <property type="project" value="SGD"/>
</dbReference>
<dbReference type="GO" id="GO:0051082">
    <property type="term" value="F:unfolded protein binding"/>
    <property type="evidence" value="ECO:0000314"/>
    <property type="project" value="SGD"/>
</dbReference>
<dbReference type="GO" id="GO:0006457">
    <property type="term" value="P:protein folding"/>
    <property type="evidence" value="ECO:0000316"/>
    <property type="project" value="SGD"/>
</dbReference>
<dbReference type="GO" id="GO:0034976">
    <property type="term" value="P:response to endoplasmic reticulum stress"/>
    <property type="evidence" value="ECO:0000318"/>
    <property type="project" value="GO_Central"/>
</dbReference>
<dbReference type="CDD" id="cd02961">
    <property type="entry name" value="PDI_a_family"/>
    <property type="match status" value="1"/>
</dbReference>
<dbReference type="CDD" id="cd02995">
    <property type="entry name" value="PDI_a_PDI_a'_C"/>
    <property type="match status" value="1"/>
</dbReference>
<dbReference type="CDD" id="cd02982">
    <property type="entry name" value="PDI_b'_family"/>
    <property type="match status" value="1"/>
</dbReference>
<dbReference type="CDD" id="cd02981">
    <property type="entry name" value="PDI_b_family"/>
    <property type="match status" value="1"/>
</dbReference>
<dbReference type="FunFam" id="3.40.30.10:FF:000139">
    <property type="entry name" value="Protein disulfide-isomerase"/>
    <property type="match status" value="1"/>
</dbReference>
<dbReference type="FunFam" id="3.40.30.10:FF:000154">
    <property type="entry name" value="Protein disulfide-isomerase"/>
    <property type="match status" value="1"/>
</dbReference>
<dbReference type="FunFam" id="3.40.30.10:FF:000397">
    <property type="entry name" value="Protein disulfide-isomerase EUG1"/>
    <property type="match status" value="1"/>
</dbReference>
<dbReference type="Gene3D" id="3.40.30.10">
    <property type="entry name" value="Glutaredoxin"/>
    <property type="match status" value="4"/>
</dbReference>
<dbReference type="InterPro" id="IPR005792">
    <property type="entry name" value="Prot_disulphide_isomerase"/>
</dbReference>
<dbReference type="InterPro" id="IPR036249">
    <property type="entry name" value="Thioredoxin-like_sf"/>
</dbReference>
<dbReference type="InterPro" id="IPR013766">
    <property type="entry name" value="Thioredoxin_domain"/>
</dbReference>
<dbReference type="NCBIfam" id="TIGR01130">
    <property type="entry name" value="ER_PDI_fam"/>
    <property type="match status" value="1"/>
</dbReference>
<dbReference type="PANTHER" id="PTHR18929">
    <property type="entry name" value="PROTEIN DISULFIDE ISOMERASE"/>
    <property type="match status" value="1"/>
</dbReference>
<dbReference type="PANTHER" id="PTHR18929:SF132">
    <property type="entry name" value="PROTEIN DISULFIDE-ISOMERASE A3"/>
    <property type="match status" value="1"/>
</dbReference>
<dbReference type="Pfam" id="PF00085">
    <property type="entry name" value="Thioredoxin"/>
    <property type="match status" value="2"/>
</dbReference>
<dbReference type="Pfam" id="PF13848">
    <property type="entry name" value="Thioredoxin_6"/>
    <property type="match status" value="1"/>
</dbReference>
<dbReference type="SUPFAM" id="SSF52833">
    <property type="entry name" value="Thioredoxin-like"/>
    <property type="match status" value="4"/>
</dbReference>
<dbReference type="PROSITE" id="PS00014">
    <property type="entry name" value="ER_TARGET"/>
    <property type="match status" value="1"/>
</dbReference>
<dbReference type="PROSITE" id="PS51352">
    <property type="entry name" value="THIOREDOXIN_2"/>
    <property type="match status" value="2"/>
</dbReference>
<name>EUG1_YEAST</name>
<gene>
    <name type="primary">EUG1</name>
    <name type="ordered locus">YDR518W</name>
    <name type="ORF">D9719.23</name>
</gene>
<proteinExistence type="evidence at protein level"/>
<reference key="1">
    <citation type="journal article" date="1992" name="Mol. Cell. Biol.">
        <title>The yeast EUG1 gene encodes an endoplasmic reticulum protein that is functionally related to protein disulfide isomerase.</title>
        <authorList>
            <person name="Tachibana C."/>
            <person name="Stevens T.H."/>
        </authorList>
    </citation>
    <scope>NUCLEOTIDE SEQUENCE</scope>
</reference>
<reference key="2">
    <citation type="journal article" date="1997" name="Nature">
        <title>The nucleotide sequence of Saccharomyces cerevisiae chromosome IV.</title>
        <authorList>
            <person name="Jacq C."/>
            <person name="Alt-Moerbe J."/>
            <person name="Andre B."/>
            <person name="Arnold W."/>
            <person name="Bahr A."/>
            <person name="Ballesta J.P.G."/>
            <person name="Bargues M."/>
            <person name="Baron L."/>
            <person name="Becker A."/>
            <person name="Biteau N."/>
            <person name="Bloecker H."/>
            <person name="Blugeon C."/>
            <person name="Boskovic J."/>
            <person name="Brandt P."/>
            <person name="Brueckner M."/>
            <person name="Buitrago M.J."/>
            <person name="Coster F."/>
            <person name="Delaveau T."/>
            <person name="del Rey F."/>
            <person name="Dujon B."/>
            <person name="Eide L.G."/>
            <person name="Garcia-Cantalejo J.M."/>
            <person name="Goffeau A."/>
            <person name="Gomez-Peris A."/>
            <person name="Granotier C."/>
            <person name="Hanemann V."/>
            <person name="Hankeln T."/>
            <person name="Hoheisel J.D."/>
            <person name="Jaeger W."/>
            <person name="Jimenez A."/>
            <person name="Jonniaux J.-L."/>
            <person name="Kraemer C."/>
            <person name="Kuester H."/>
            <person name="Laamanen P."/>
            <person name="Legros Y."/>
            <person name="Louis E.J."/>
            <person name="Moeller-Rieker S."/>
            <person name="Monnet A."/>
            <person name="Moro M."/>
            <person name="Mueller-Auer S."/>
            <person name="Nussbaumer B."/>
            <person name="Paricio N."/>
            <person name="Paulin L."/>
            <person name="Perea J."/>
            <person name="Perez-Alonso M."/>
            <person name="Perez-Ortin J.E."/>
            <person name="Pohl T.M."/>
            <person name="Prydz H."/>
            <person name="Purnelle B."/>
            <person name="Rasmussen S.W."/>
            <person name="Remacha M.A."/>
            <person name="Revuelta J.L."/>
            <person name="Rieger M."/>
            <person name="Salom D."/>
            <person name="Saluz H.P."/>
            <person name="Saiz J.E."/>
            <person name="Saren A.-M."/>
            <person name="Schaefer M."/>
            <person name="Scharfe M."/>
            <person name="Schmidt E.R."/>
            <person name="Schneider C."/>
            <person name="Scholler P."/>
            <person name="Schwarz S."/>
            <person name="Soler-Mira A."/>
            <person name="Urrestarazu L.A."/>
            <person name="Verhasselt P."/>
            <person name="Vissers S."/>
            <person name="Voet M."/>
            <person name="Volckaert G."/>
            <person name="Wagner G."/>
            <person name="Wambutt R."/>
            <person name="Wedler E."/>
            <person name="Wedler H."/>
            <person name="Woelfl S."/>
            <person name="Harris D.E."/>
            <person name="Bowman S."/>
            <person name="Brown D."/>
            <person name="Churcher C.M."/>
            <person name="Connor R."/>
            <person name="Dedman K."/>
            <person name="Gentles S."/>
            <person name="Hamlin N."/>
            <person name="Hunt S."/>
            <person name="Jones L."/>
            <person name="McDonald S."/>
            <person name="Murphy L.D."/>
            <person name="Niblett D."/>
            <person name="Odell C."/>
            <person name="Oliver K."/>
            <person name="Rajandream M.A."/>
            <person name="Richards C."/>
            <person name="Shore L."/>
            <person name="Walsh S.V."/>
            <person name="Barrell B.G."/>
            <person name="Dietrich F.S."/>
            <person name="Mulligan J.T."/>
            <person name="Allen E."/>
            <person name="Araujo R."/>
            <person name="Aviles E."/>
            <person name="Berno A."/>
            <person name="Carpenter J."/>
            <person name="Chen E."/>
            <person name="Cherry J.M."/>
            <person name="Chung E."/>
            <person name="Duncan M."/>
            <person name="Hunicke-Smith S."/>
            <person name="Hyman R.W."/>
            <person name="Komp C."/>
            <person name="Lashkari D."/>
            <person name="Lew H."/>
            <person name="Lin D."/>
            <person name="Mosedale D."/>
            <person name="Nakahara K."/>
            <person name="Namath A."/>
            <person name="Oefner P."/>
            <person name="Oh C."/>
            <person name="Petel F.X."/>
            <person name="Roberts D."/>
            <person name="Schramm S."/>
            <person name="Schroeder M."/>
            <person name="Shogren T."/>
            <person name="Shroff N."/>
            <person name="Winant A."/>
            <person name="Yelton M.A."/>
            <person name="Botstein D."/>
            <person name="Davis R.W."/>
            <person name="Johnston M."/>
            <person name="Andrews S."/>
            <person name="Brinkman R."/>
            <person name="Cooper J."/>
            <person name="Ding H."/>
            <person name="Du Z."/>
            <person name="Favello A."/>
            <person name="Fulton L."/>
            <person name="Gattung S."/>
            <person name="Greco T."/>
            <person name="Hallsworth K."/>
            <person name="Hawkins J."/>
            <person name="Hillier L.W."/>
            <person name="Jier M."/>
            <person name="Johnson D."/>
            <person name="Johnston L."/>
            <person name="Kirsten J."/>
            <person name="Kucaba T."/>
            <person name="Langston Y."/>
            <person name="Latreille P."/>
            <person name="Le T."/>
            <person name="Mardis E."/>
            <person name="Menezes S."/>
            <person name="Miller N."/>
            <person name="Nhan M."/>
            <person name="Pauley A."/>
            <person name="Peluso D."/>
            <person name="Rifkin L."/>
            <person name="Riles L."/>
            <person name="Taich A."/>
            <person name="Trevaskis E."/>
            <person name="Vignati D."/>
            <person name="Wilcox L."/>
            <person name="Wohldman P."/>
            <person name="Vaudin M."/>
            <person name="Wilson R."/>
            <person name="Waterston R."/>
            <person name="Albermann K."/>
            <person name="Hani J."/>
            <person name="Heumann K."/>
            <person name="Kleine K."/>
            <person name="Mewes H.-W."/>
            <person name="Zollner A."/>
            <person name="Zaccaria P."/>
        </authorList>
    </citation>
    <scope>NUCLEOTIDE SEQUENCE [LARGE SCALE GENOMIC DNA]</scope>
    <source>
        <strain>ATCC 204508 / S288c</strain>
    </source>
</reference>
<reference key="3">
    <citation type="journal article" date="2014" name="G3 (Bethesda)">
        <title>The reference genome sequence of Saccharomyces cerevisiae: Then and now.</title>
        <authorList>
            <person name="Engel S.R."/>
            <person name="Dietrich F.S."/>
            <person name="Fisk D.G."/>
            <person name="Binkley G."/>
            <person name="Balakrishnan R."/>
            <person name="Costanzo M.C."/>
            <person name="Dwight S.S."/>
            <person name="Hitz B.C."/>
            <person name="Karra K."/>
            <person name="Nash R.S."/>
            <person name="Weng S."/>
            <person name="Wong E.D."/>
            <person name="Lloyd P."/>
            <person name="Skrzypek M.S."/>
            <person name="Miyasato S.R."/>
            <person name="Simison M."/>
            <person name="Cherry J.M."/>
        </authorList>
    </citation>
    <scope>GENOME REANNOTATION</scope>
    <source>
        <strain>ATCC 204508 / S288c</strain>
    </source>
</reference>
<reference key="4">
    <citation type="journal article" date="2007" name="Genome Res.">
        <title>Approaching a complete repository of sequence-verified protein-encoding clones for Saccharomyces cerevisiae.</title>
        <authorList>
            <person name="Hu Y."/>
            <person name="Rolfs A."/>
            <person name="Bhullar B."/>
            <person name="Murthy T.V.S."/>
            <person name="Zhu C."/>
            <person name="Berger M.F."/>
            <person name="Camargo A.A."/>
            <person name="Kelley F."/>
            <person name="McCarron S."/>
            <person name="Jepson D."/>
            <person name="Richardson A."/>
            <person name="Raphael J."/>
            <person name="Moreira D."/>
            <person name="Taycher E."/>
            <person name="Zuo D."/>
            <person name="Mohr S."/>
            <person name="Kane M.F."/>
            <person name="Williamson J."/>
            <person name="Simpson A.J.G."/>
            <person name="Bulyk M.L."/>
            <person name="Harlow E."/>
            <person name="Marsischky G."/>
            <person name="Kolodner R.D."/>
            <person name="LaBaer J."/>
        </authorList>
    </citation>
    <scope>NUCLEOTIDE SEQUENCE [GENOMIC DNA]</scope>
    <source>
        <strain>ATCC 204508 / S288c</strain>
    </source>
</reference>
<reference key="5">
    <citation type="journal article" date="2001" name="Biochem. J.">
        <title>Mutation of yeast Eug1p CXXS active sites to CXXC results in a dramatic increase in protein disulphide isomerase activity.</title>
        <authorList>
            <person name="Noergaard P."/>
            <person name="Winther J.R."/>
        </authorList>
    </citation>
    <scope>CHARACTERIZATION OF PDI ACTIVITY</scope>
    <scope>MUTAGENESIS OF SER-65 AND SER-408</scope>
</reference>
<reference key="6">
    <citation type="journal article" date="2005" name="J. Biol. Chem.">
        <title>Interactions among yeast protein-disulfide isomerase proteins and endoplasmic reticulum chaperone proteins influence their activities.</title>
        <authorList>
            <person name="Kimura T."/>
            <person name="Hosoda Y."/>
            <person name="Sato Y."/>
            <person name="Kitamura Y."/>
            <person name="Ikeda T."/>
            <person name="Horibe T."/>
            <person name="Kikuchi M."/>
        </authorList>
    </citation>
    <scope>FUNCTION</scope>
    <scope>INTERACTION WITH EPS1</scope>
</reference>
<accession>P32474</accession>
<accession>D6VTD9</accession>
<accession>E9P901</accession>
<evidence type="ECO:0000255" key="1"/>
<evidence type="ECO:0000255" key="2">
    <source>
        <dbReference type="PROSITE-ProRule" id="PRU00691"/>
    </source>
</evidence>
<evidence type="ECO:0000269" key="3">
    <source>
    </source>
</evidence>
<evidence type="ECO:0000269" key="4">
    <source>
    </source>
</evidence>
<evidence type="ECO:0000305" key="5"/>
<keyword id="KW-0256">Endoplasmic reticulum</keyword>
<keyword id="KW-0325">Glycoprotein</keyword>
<keyword id="KW-0413">Isomerase</keyword>
<keyword id="KW-0676">Redox-active center</keyword>
<keyword id="KW-1185">Reference proteome</keyword>
<keyword id="KW-0677">Repeat</keyword>
<keyword id="KW-0732">Signal</keyword>
<feature type="signal peptide" evidence="1">
    <location>
        <begin position="1"/>
        <end position="29"/>
    </location>
</feature>
<feature type="chain" id="PRO_0000034219" description="Protein disulfide-isomerase EUG1">
    <location>
        <begin position="30"/>
        <end position="517"/>
    </location>
</feature>
<feature type="domain" description="Thioredoxin 1" evidence="2">
    <location>
        <begin position="30"/>
        <end position="141"/>
    </location>
</feature>
<feature type="domain" description="Thioredoxin 2" evidence="2">
    <location>
        <begin position="355"/>
        <end position="487"/>
    </location>
</feature>
<feature type="short sequence motif" description="Prevents secretion from ER">
    <location>
        <begin position="514"/>
        <end position="517"/>
    </location>
</feature>
<feature type="glycosylation site" description="N-linked (GlcNAc...) asparagine" evidence="1">
    <location>
        <position position="159"/>
    </location>
</feature>
<feature type="glycosylation site" description="N-linked (GlcNAc...) asparagine" evidence="1">
    <location>
        <position position="174"/>
    </location>
</feature>
<feature type="glycosylation site" description="N-linked (GlcNAc...) asparagine" evidence="1">
    <location>
        <position position="207"/>
    </location>
</feature>
<feature type="glycosylation site" description="N-linked (GlcNAc...) asparagine" evidence="1">
    <location>
        <position position="293"/>
    </location>
</feature>
<feature type="glycosylation site" description="N-linked (GlcNAc...) asparagine" evidence="1">
    <location>
        <position position="462"/>
    </location>
</feature>
<feature type="mutagenesis site" description="Increases PDI activity." evidence="3">
    <original>S</original>
    <variation>C</variation>
    <location>
        <position position="65"/>
    </location>
</feature>
<feature type="mutagenesis site" description="Increases PDI activity." evidence="3">
    <original>S</original>
    <variation>C</variation>
    <location>
        <position position="408"/>
    </location>
</feature>
<feature type="sequence conflict" description="In Ref. 4; AAT92989." evidence="5" ref="4">
    <original>V</original>
    <variation>G</variation>
    <location>
        <position position="364"/>
    </location>
</feature>
<comment type="function">
    <text evidence="4">Probably interacts with nascent polypeptides in the endoplasmic reticulum. It is an essential gene only in the absence of PDI. Its native disulfide isomerase activity is very low.</text>
</comment>
<comment type="catalytic activity">
    <reaction>
        <text>Catalyzes the rearrangement of -S-S- bonds in proteins.</text>
        <dbReference type="EC" id="5.3.4.1"/>
    </reaction>
</comment>
<comment type="subunit">
    <text evidence="4">Interacts with EPS1.</text>
</comment>
<comment type="subcellular location">
    <subcellularLocation>
        <location>Endoplasmic reticulum lumen</location>
    </subcellularLocation>
</comment>
<comment type="PTM">
    <text>May have O-linked mannose residues.</text>
</comment>
<comment type="similarity">
    <text evidence="5">Belongs to the protein disulfide isomerase family.</text>
</comment>
<sequence length="517" mass="58982">MQVTTRFISAIVSFCLFASFTLAENSARATPGSDLLVLTEKKFKSFIESHPLVLVEFFAPWCLHSQILRPHLEEAASILKEHNVPVVQIDCEANSMVCLQQTINTYPTLKIFKNGRIFDGQVYRGVKITDEITQYMIQLYEASVIYLNSEDEIQPYLENATLPVVINRGLTGLNETYQEVALDLAEDYVFLSLLDSEDKSLSIHLPNTTEPILFDGNVDSLVGNSVALTQWLKVVILPYFTDIEPDLFPKYISSNLPLAYFFYTSEEELEDYTDLFTQLGKENRGQINFIALNSTMFPHHVRFLNMREQFPLFAIHNMINNLKYGLPQLPEEEYAKLEKPQPLDRDMIVQLVKDYREGTAKPIVKSEEIPKEQKSNVYKIVGKTHDDIVHDDDKDVLVKYYATWCIHSKRFAPIYEEIANVLASDESVRDKILIAEVDSGANDILSFPVTGYPTIALYPAGNNSKPIIFNKIRNLEDVFEFIKESGTHHIDGQAIYDKLHQAKDSEVSTEDTVHDEL</sequence>
<organism>
    <name type="scientific">Saccharomyces cerevisiae (strain ATCC 204508 / S288c)</name>
    <name type="common">Baker's yeast</name>
    <dbReference type="NCBI Taxonomy" id="559292"/>
    <lineage>
        <taxon>Eukaryota</taxon>
        <taxon>Fungi</taxon>
        <taxon>Dikarya</taxon>
        <taxon>Ascomycota</taxon>
        <taxon>Saccharomycotina</taxon>
        <taxon>Saccharomycetes</taxon>
        <taxon>Saccharomycetales</taxon>
        <taxon>Saccharomycetaceae</taxon>
        <taxon>Saccharomyces</taxon>
    </lineage>
</organism>